<comment type="similarity">
    <text evidence="1">Belongs to the UPF0597 family.</text>
</comment>
<proteinExistence type="inferred from homology"/>
<dbReference type="EMBL" id="CP000728">
    <property type="protein sequence ID" value="ABS41145.1"/>
    <property type="molecule type" value="Genomic_DNA"/>
</dbReference>
<dbReference type="RefSeq" id="WP_012100023.1">
    <property type="nucleotide sequence ID" value="NC_009699.1"/>
</dbReference>
<dbReference type="SMR" id="A7GEX3"/>
<dbReference type="KEGG" id="cbf:CLI_2075"/>
<dbReference type="HOGENOM" id="CLU_051840_0_0_9"/>
<dbReference type="Proteomes" id="UP000002410">
    <property type="component" value="Chromosome"/>
</dbReference>
<dbReference type="GO" id="GO:0080146">
    <property type="term" value="F:L-cysteine desulfhydrase activity"/>
    <property type="evidence" value="ECO:0007669"/>
    <property type="project" value="TreeGrafter"/>
</dbReference>
<dbReference type="GO" id="GO:0019450">
    <property type="term" value="P:L-cysteine catabolic process to pyruvate"/>
    <property type="evidence" value="ECO:0007669"/>
    <property type="project" value="TreeGrafter"/>
</dbReference>
<dbReference type="HAMAP" id="MF_01845">
    <property type="entry name" value="UPF0597"/>
    <property type="match status" value="1"/>
</dbReference>
<dbReference type="InterPro" id="IPR005130">
    <property type="entry name" value="Ser_deHydtase-like_asu"/>
</dbReference>
<dbReference type="InterPro" id="IPR021144">
    <property type="entry name" value="UPF0597"/>
</dbReference>
<dbReference type="PANTHER" id="PTHR30501">
    <property type="entry name" value="UPF0597 PROTEIN YHAM"/>
    <property type="match status" value="1"/>
</dbReference>
<dbReference type="PANTHER" id="PTHR30501:SF2">
    <property type="entry name" value="UPF0597 PROTEIN YHAM"/>
    <property type="match status" value="1"/>
</dbReference>
<dbReference type="Pfam" id="PF03313">
    <property type="entry name" value="SDH_alpha"/>
    <property type="match status" value="1"/>
</dbReference>
<dbReference type="PIRSF" id="PIRSF006054">
    <property type="entry name" value="UCP006054"/>
    <property type="match status" value="1"/>
</dbReference>
<name>Y2075_CLOBL</name>
<sequence length="434" mass="46264">MSRLSKEEISERLLELIKDETKPAIGCTEPVAVAFTVATGKKYMAGEVLKIDLKVSKNILKNGKSVTIPNTEVCGLDIAGALGGICGDPEEGLFVFKNVNKDYLDKAREMIKNKVVTLNPIENTDPVFVEATLKGEKDEVIAILEGGHTNIERIIVNGKIAFEKDNKNEKDNKDCDFMKELSLKDIREITEDISIEKLGFIMDGIEMNKEAAKEGLKRQKGLTLGSSLLKLQQEGKLGKDSATIARILTAAGSDLRMGGGMCPIMTSGGSGNQGLCVILPITVVAEDIKAPKEKLQRAVFFGHAVNNFVKKYTGKLSAICGCAIAAGIGATAGIAWLLGGKDKEINGAILNMLANLTGMVCDGAKGSCAIKLSTSASEAVISAYLALNDIIVPNNTGIIGNTVEDTINNLGMLCKDGFYKADDVMLSIACKEVI</sequence>
<gene>
    <name type="ordered locus">CLI_2075</name>
</gene>
<feature type="chain" id="PRO_0000339797" description="UPF0597 protein CLI_2075">
    <location>
        <begin position="1"/>
        <end position="434"/>
    </location>
</feature>
<reference key="1">
    <citation type="submission" date="2007-06" db="EMBL/GenBank/DDBJ databases">
        <authorList>
            <person name="Brinkac L.M."/>
            <person name="Daugherty S."/>
            <person name="Dodson R.J."/>
            <person name="Madupu R."/>
            <person name="Brown J.L."/>
            <person name="Bruce D."/>
            <person name="Detter C."/>
            <person name="Munk C."/>
            <person name="Smith L.A."/>
            <person name="Smith T.J."/>
            <person name="White O."/>
            <person name="Brettin T.S."/>
        </authorList>
    </citation>
    <scope>NUCLEOTIDE SEQUENCE [LARGE SCALE GENOMIC DNA]</scope>
    <source>
        <strain>Langeland / NCTC 10281 / Type F</strain>
    </source>
</reference>
<evidence type="ECO:0000255" key="1">
    <source>
        <dbReference type="HAMAP-Rule" id="MF_01845"/>
    </source>
</evidence>
<organism>
    <name type="scientific">Clostridium botulinum (strain Langeland / NCTC 10281 / Type F)</name>
    <dbReference type="NCBI Taxonomy" id="441772"/>
    <lineage>
        <taxon>Bacteria</taxon>
        <taxon>Bacillati</taxon>
        <taxon>Bacillota</taxon>
        <taxon>Clostridia</taxon>
        <taxon>Eubacteriales</taxon>
        <taxon>Clostridiaceae</taxon>
        <taxon>Clostridium</taxon>
    </lineage>
</organism>
<accession>A7GEX3</accession>
<protein>
    <recommendedName>
        <fullName evidence="1">UPF0597 protein CLI_2075</fullName>
    </recommendedName>
</protein>